<keyword id="KW-0963">Cytoplasm</keyword>
<keyword id="KW-0342">GTP-binding</keyword>
<keyword id="KW-0378">Hydrolase</keyword>
<keyword id="KW-0460">Magnesium</keyword>
<keyword id="KW-0479">Metal-binding</keyword>
<keyword id="KW-0547">Nucleotide-binding</keyword>
<keyword id="KW-0630">Potassium</keyword>
<keyword id="KW-1185">Reference proteome</keyword>
<keyword id="KW-0819">tRNA processing</keyword>
<evidence type="ECO:0000255" key="1">
    <source>
        <dbReference type="HAMAP-Rule" id="MF_00379"/>
    </source>
</evidence>
<organism>
    <name type="scientific">Streptococcus sanguinis (strain SK36)</name>
    <dbReference type="NCBI Taxonomy" id="388919"/>
    <lineage>
        <taxon>Bacteria</taxon>
        <taxon>Bacillati</taxon>
        <taxon>Bacillota</taxon>
        <taxon>Bacilli</taxon>
        <taxon>Lactobacillales</taxon>
        <taxon>Streptococcaceae</taxon>
        <taxon>Streptococcus</taxon>
    </lineage>
</organism>
<sequence>MITREFDTIAAISTPLGEGAIGIVRLSGTDSFAIAQKIFKGKNLSEVESHTLNYGHIVDPQNQEILDEVMLGAMRSPKTFTREDIIEINTHGGIAVTNEILQLAIREGARMAEPGEFTKRAFLNGRVDLTQAEAVMDIIRAKTDKAMNNAVKQLDGSLSNLINNTRQEILNTLAQVEVNIDYPEYDDVEEMTTQLMREKTAEFEALLSNLLNTARRGKILREGISTAIIGRPNVGKSSLLNNLLREDKAIVTDIEGTTRDVIEEYVNIKGLPLKLIDTAGIRETDDLVEQIGVERSKKALQEADLVLLVLNASEPLTDQDRQLLEISKDSNRIVLLNKTDLEEKIELDLLPTDVIKISVLHNQNIDKIEERINQLFFENAGIVEQDATYLSNARHISLIEKALESLQAVNQGLEMGMPVDLLQVDMTRTWEILGEITGDAAPDELITQLFSQFCLGK</sequence>
<proteinExistence type="inferred from homology"/>
<gene>
    <name evidence="1" type="primary">mnmE</name>
    <name evidence="1" type="synonym">trmE</name>
    <name type="ordered locus">SSA_1262</name>
</gene>
<dbReference type="EC" id="3.6.-.-" evidence="1"/>
<dbReference type="EMBL" id="CP000387">
    <property type="protein sequence ID" value="ABN44665.1"/>
    <property type="molecule type" value="Genomic_DNA"/>
</dbReference>
<dbReference type="RefSeq" id="WP_011837022.1">
    <property type="nucleotide sequence ID" value="NC_009009.1"/>
</dbReference>
<dbReference type="RefSeq" id="YP_001035215.1">
    <property type="nucleotide sequence ID" value="NC_009009.1"/>
</dbReference>
<dbReference type="SMR" id="A3CNB0"/>
<dbReference type="STRING" id="388919.SSA_1262"/>
<dbReference type="KEGG" id="ssa:SSA_1262"/>
<dbReference type="PATRIC" id="fig|388919.9.peg.1202"/>
<dbReference type="eggNOG" id="COG0486">
    <property type="taxonomic scope" value="Bacteria"/>
</dbReference>
<dbReference type="HOGENOM" id="CLU_019624_4_1_9"/>
<dbReference type="OrthoDB" id="9805918at2"/>
<dbReference type="Proteomes" id="UP000002148">
    <property type="component" value="Chromosome"/>
</dbReference>
<dbReference type="GO" id="GO:0005829">
    <property type="term" value="C:cytosol"/>
    <property type="evidence" value="ECO:0007669"/>
    <property type="project" value="TreeGrafter"/>
</dbReference>
<dbReference type="GO" id="GO:0005525">
    <property type="term" value="F:GTP binding"/>
    <property type="evidence" value="ECO:0007669"/>
    <property type="project" value="UniProtKB-UniRule"/>
</dbReference>
<dbReference type="GO" id="GO:0003924">
    <property type="term" value="F:GTPase activity"/>
    <property type="evidence" value="ECO:0007669"/>
    <property type="project" value="UniProtKB-UniRule"/>
</dbReference>
<dbReference type="GO" id="GO:0046872">
    <property type="term" value="F:metal ion binding"/>
    <property type="evidence" value="ECO:0007669"/>
    <property type="project" value="UniProtKB-KW"/>
</dbReference>
<dbReference type="GO" id="GO:0030488">
    <property type="term" value="P:tRNA methylation"/>
    <property type="evidence" value="ECO:0007669"/>
    <property type="project" value="TreeGrafter"/>
</dbReference>
<dbReference type="GO" id="GO:0002098">
    <property type="term" value="P:tRNA wobble uridine modification"/>
    <property type="evidence" value="ECO:0007669"/>
    <property type="project" value="TreeGrafter"/>
</dbReference>
<dbReference type="CDD" id="cd04164">
    <property type="entry name" value="trmE"/>
    <property type="match status" value="1"/>
</dbReference>
<dbReference type="CDD" id="cd14858">
    <property type="entry name" value="TrmE_N"/>
    <property type="match status" value="1"/>
</dbReference>
<dbReference type="FunFam" id="3.30.1360.120:FF:000003">
    <property type="entry name" value="tRNA modification GTPase MnmE"/>
    <property type="match status" value="1"/>
</dbReference>
<dbReference type="FunFam" id="3.40.50.300:FF:000494">
    <property type="entry name" value="tRNA modification GTPase MnmE"/>
    <property type="match status" value="1"/>
</dbReference>
<dbReference type="Gene3D" id="3.40.50.300">
    <property type="entry name" value="P-loop containing nucleotide triphosphate hydrolases"/>
    <property type="match status" value="1"/>
</dbReference>
<dbReference type="Gene3D" id="3.30.1360.120">
    <property type="entry name" value="Probable tRNA modification gtpase trme, domain 1"/>
    <property type="match status" value="1"/>
</dbReference>
<dbReference type="Gene3D" id="1.20.120.430">
    <property type="entry name" value="tRNA modification GTPase MnmE domain 2"/>
    <property type="match status" value="1"/>
</dbReference>
<dbReference type="HAMAP" id="MF_00379">
    <property type="entry name" value="GTPase_MnmE"/>
    <property type="match status" value="1"/>
</dbReference>
<dbReference type="InterPro" id="IPR031168">
    <property type="entry name" value="G_TrmE"/>
</dbReference>
<dbReference type="InterPro" id="IPR006073">
    <property type="entry name" value="GTP-bd"/>
</dbReference>
<dbReference type="InterPro" id="IPR018948">
    <property type="entry name" value="GTP-bd_TrmE_N"/>
</dbReference>
<dbReference type="InterPro" id="IPR004520">
    <property type="entry name" value="GTPase_MnmE"/>
</dbReference>
<dbReference type="InterPro" id="IPR027368">
    <property type="entry name" value="MnmE_dom2"/>
</dbReference>
<dbReference type="InterPro" id="IPR025867">
    <property type="entry name" value="MnmE_helical"/>
</dbReference>
<dbReference type="InterPro" id="IPR027417">
    <property type="entry name" value="P-loop_NTPase"/>
</dbReference>
<dbReference type="InterPro" id="IPR005225">
    <property type="entry name" value="Small_GTP-bd"/>
</dbReference>
<dbReference type="InterPro" id="IPR027266">
    <property type="entry name" value="TrmE/GcvT_dom1"/>
</dbReference>
<dbReference type="NCBIfam" id="TIGR00450">
    <property type="entry name" value="mnmE_trmE_thdF"/>
    <property type="match status" value="1"/>
</dbReference>
<dbReference type="NCBIfam" id="NF003661">
    <property type="entry name" value="PRK05291.1-3"/>
    <property type="match status" value="1"/>
</dbReference>
<dbReference type="NCBIfam" id="TIGR00231">
    <property type="entry name" value="small_GTP"/>
    <property type="match status" value="1"/>
</dbReference>
<dbReference type="PANTHER" id="PTHR42714">
    <property type="entry name" value="TRNA MODIFICATION GTPASE GTPBP3"/>
    <property type="match status" value="1"/>
</dbReference>
<dbReference type="PANTHER" id="PTHR42714:SF2">
    <property type="entry name" value="TRNA MODIFICATION GTPASE GTPBP3, MITOCHONDRIAL"/>
    <property type="match status" value="1"/>
</dbReference>
<dbReference type="Pfam" id="PF01926">
    <property type="entry name" value="MMR_HSR1"/>
    <property type="match status" value="1"/>
</dbReference>
<dbReference type="Pfam" id="PF12631">
    <property type="entry name" value="MnmE_helical"/>
    <property type="match status" value="1"/>
</dbReference>
<dbReference type="Pfam" id="PF10396">
    <property type="entry name" value="TrmE_N"/>
    <property type="match status" value="1"/>
</dbReference>
<dbReference type="SUPFAM" id="SSF52540">
    <property type="entry name" value="P-loop containing nucleoside triphosphate hydrolases"/>
    <property type="match status" value="1"/>
</dbReference>
<dbReference type="SUPFAM" id="SSF116878">
    <property type="entry name" value="TrmE connector domain"/>
    <property type="match status" value="1"/>
</dbReference>
<dbReference type="PROSITE" id="PS51709">
    <property type="entry name" value="G_TRME"/>
    <property type="match status" value="1"/>
</dbReference>
<reference key="1">
    <citation type="journal article" date="2007" name="J. Bacteriol.">
        <title>Genome of the opportunistic pathogen Streptococcus sanguinis.</title>
        <authorList>
            <person name="Xu P."/>
            <person name="Alves J.M."/>
            <person name="Kitten T."/>
            <person name="Brown A."/>
            <person name="Chen Z."/>
            <person name="Ozaki L.S."/>
            <person name="Manque P."/>
            <person name="Ge X."/>
            <person name="Serrano M.G."/>
            <person name="Puiu D."/>
            <person name="Hendricks S."/>
            <person name="Wang Y."/>
            <person name="Chaplin M.D."/>
            <person name="Akan D."/>
            <person name="Paik S."/>
            <person name="Peterson D.L."/>
            <person name="Macrina F.L."/>
            <person name="Buck G.A."/>
        </authorList>
    </citation>
    <scope>NUCLEOTIDE SEQUENCE [LARGE SCALE GENOMIC DNA]</scope>
    <source>
        <strain>SK36</strain>
    </source>
</reference>
<accession>A3CNB0</accession>
<comment type="function">
    <text evidence="1">Exhibits a very high intrinsic GTPase hydrolysis rate. Involved in the addition of a carboxymethylaminomethyl (cmnm) group at the wobble position (U34) of certain tRNAs, forming tRNA-cmnm(5)s(2)U34.</text>
</comment>
<comment type="cofactor">
    <cofactor evidence="1">
        <name>K(+)</name>
        <dbReference type="ChEBI" id="CHEBI:29103"/>
    </cofactor>
    <text evidence="1">Binds 1 potassium ion per subunit.</text>
</comment>
<comment type="subunit">
    <text evidence="1">Homodimer. Heterotetramer of two MnmE and two MnmG subunits.</text>
</comment>
<comment type="subcellular location">
    <subcellularLocation>
        <location evidence="1">Cytoplasm</location>
    </subcellularLocation>
</comment>
<comment type="similarity">
    <text evidence="1">Belongs to the TRAFAC class TrmE-Era-EngA-EngB-Septin-like GTPase superfamily. TrmE GTPase family.</text>
</comment>
<protein>
    <recommendedName>
        <fullName evidence="1">tRNA modification GTPase MnmE</fullName>
        <ecNumber evidence="1">3.6.-.-</ecNumber>
    </recommendedName>
</protein>
<feature type="chain" id="PRO_1000048893" description="tRNA modification GTPase MnmE">
    <location>
        <begin position="1"/>
        <end position="457"/>
    </location>
</feature>
<feature type="domain" description="TrmE-type G">
    <location>
        <begin position="223"/>
        <end position="377"/>
    </location>
</feature>
<feature type="binding site" evidence="1">
    <location>
        <position position="25"/>
    </location>
    <ligand>
        <name>(6S)-5-formyl-5,6,7,8-tetrahydrofolate</name>
        <dbReference type="ChEBI" id="CHEBI:57457"/>
    </ligand>
</feature>
<feature type="binding site" evidence="1">
    <location>
        <position position="87"/>
    </location>
    <ligand>
        <name>(6S)-5-formyl-5,6,7,8-tetrahydrofolate</name>
        <dbReference type="ChEBI" id="CHEBI:57457"/>
    </ligand>
</feature>
<feature type="binding site" evidence="1">
    <location>
        <position position="126"/>
    </location>
    <ligand>
        <name>(6S)-5-formyl-5,6,7,8-tetrahydrofolate</name>
        <dbReference type="ChEBI" id="CHEBI:57457"/>
    </ligand>
</feature>
<feature type="binding site" evidence="1">
    <location>
        <begin position="233"/>
        <end position="238"/>
    </location>
    <ligand>
        <name>GTP</name>
        <dbReference type="ChEBI" id="CHEBI:37565"/>
    </ligand>
</feature>
<feature type="binding site" evidence="1">
    <location>
        <position position="233"/>
    </location>
    <ligand>
        <name>K(+)</name>
        <dbReference type="ChEBI" id="CHEBI:29103"/>
    </ligand>
</feature>
<feature type="binding site" evidence="1">
    <location>
        <position position="237"/>
    </location>
    <ligand>
        <name>Mg(2+)</name>
        <dbReference type="ChEBI" id="CHEBI:18420"/>
    </ligand>
</feature>
<feature type="binding site" evidence="1">
    <location>
        <begin position="252"/>
        <end position="258"/>
    </location>
    <ligand>
        <name>GTP</name>
        <dbReference type="ChEBI" id="CHEBI:37565"/>
    </ligand>
</feature>
<feature type="binding site" evidence="1">
    <location>
        <position position="252"/>
    </location>
    <ligand>
        <name>K(+)</name>
        <dbReference type="ChEBI" id="CHEBI:29103"/>
    </ligand>
</feature>
<feature type="binding site" evidence="1">
    <location>
        <position position="254"/>
    </location>
    <ligand>
        <name>K(+)</name>
        <dbReference type="ChEBI" id="CHEBI:29103"/>
    </ligand>
</feature>
<feature type="binding site" evidence="1">
    <location>
        <position position="257"/>
    </location>
    <ligand>
        <name>K(+)</name>
        <dbReference type="ChEBI" id="CHEBI:29103"/>
    </ligand>
</feature>
<feature type="binding site" evidence="1">
    <location>
        <position position="258"/>
    </location>
    <ligand>
        <name>Mg(2+)</name>
        <dbReference type="ChEBI" id="CHEBI:18420"/>
    </ligand>
</feature>
<feature type="binding site" evidence="1">
    <location>
        <begin position="277"/>
        <end position="280"/>
    </location>
    <ligand>
        <name>GTP</name>
        <dbReference type="ChEBI" id="CHEBI:37565"/>
    </ligand>
</feature>
<feature type="binding site" evidence="1">
    <location>
        <position position="457"/>
    </location>
    <ligand>
        <name>(6S)-5-formyl-5,6,7,8-tetrahydrofolate</name>
        <dbReference type="ChEBI" id="CHEBI:57457"/>
    </ligand>
</feature>
<name>MNME_STRSV</name>